<keyword id="KW-0067">ATP-binding</keyword>
<keyword id="KW-0997">Cell inner membrane</keyword>
<keyword id="KW-1003">Cell membrane</keyword>
<keyword id="KW-0472">Membrane</keyword>
<keyword id="KW-0547">Nucleotide-binding</keyword>
<keyword id="KW-1185">Reference proteome</keyword>
<keyword id="KW-0764">Sulfate transport</keyword>
<keyword id="KW-1278">Translocase</keyword>
<keyword id="KW-0813">Transport</keyword>
<organism>
    <name type="scientific">Methylococcus capsulatus (strain ATCC 33009 / NCIMB 11132 / Bath)</name>
    <dbReference type="NCBI Taxonomy" id="243233"/>
    <lineage>
        <taxon>Bacteria</taxon>
        <taxon>Pseudomonadati</taxon>
        <taxon>Pseudomonadota</taxon>
        <taxon>Gammaproteobacteria</taxon>
        <taxon>Methylococcales</taxon>
        <taxon>Methylococcaceae</taxon>
        <taxon>Methylococcus</taxon>
    </lineage>
</organism>
<accession>Q609Q1</accession>
<dbReference type="EC" id="7.3.2.3" evidence="1"/>
<dbReference type="EMBL" id="AE017282">
    <property type="protein sequence ID" value="AAU92758.1"/>
    <property type="molecule type" value="Genomic_DNA"/>
</dbReference>
<dbReference type="RefSeq" id="WP_010960469.1">
    <property type="nucleotide sequence ID" value="NC_002977.6"/>
</dbReference>
<dbReference type="SMR" id="Q609Q1"/>
<dbReference type="STRING" id="243233.MCA1181"/>
<dbReference type="GeneID" id="88223467"/>
<dbReference type="KEGG" id="mca:MCA1181"/>
<dbReference type="eggNOG" id="COG1118">
    <property type="taxonomic scope" value="Bacteria"/>
</dbReference>
<dbReference type="HOGENOM" id="CLU_000604_1_1_6"/>
<dbReference type="Proteomes" id="UP000006821">
    <property type="component" value="Chromosome"/>
</dbReference>
<dbReference type="GO" id="GO:0043190">
    <property type="term" value="C:ATP-binding cassette (ABC) transporter complex"/>
    <property type="evidence" value="ECO:0007669"/>
    <property type="project" value="InterPro"/>
</dbReference>
<dbReference type="GO" id="GO:0015419">
    <property type="term" value="F:ABC-type sulfate transporter activity"/>
    <property type="evidence" value="ECO:0007669"/>
    <property type="project" value="InterPro"/>
</dbReference>
<dbReference type="GO" id="GO:0102025">
    <property type="term" value="F:ABC-type thiosulfate transporter activity"/>
    <property type="evidence" value="ECO:0007669"/>
    <property type="project" value="RHEA"/>
</dbReference>
<dbReference type="GO" id="GO:0005524">
    <property type="term" value="F:ATP binding"/>
    <property type="evidence" value="ECO:0007669"/>
    <property type="project" value="UniProtKB-KW"/>
</dbReference>
<dbReference type="GO" id="GO:0016887">
    <property type="term" value="F:ATP hydrolysis activity"/>
    <property type="evidence" value="ECO:0007669"/>
    <property type="project" value="InterPro"/>
</dbReference>
<dbReference type="CDD" id="cd03296">
    <property type="entry name" value="ABC_CysA_sulfate_importer"/>
    <property type="match status" value="1"/>
</dbReference>
<dbReference type="FunFam" id="3.40.50.300:FF:000227">
    <property type="entry name" value="Sulfate/thiosulfate import ATP-binding protein CysA"/>
    <property type="match status" value="1"/>
</dbReference>
<dbReference type="Gene3D" id="3.40.50.300">
    <property type="entry name" value="P-loop containing nucleotide triphosphate hydrolases"/>
    <property type="match status" value="1"/>
</dbReference>
<dbReference type="InterPro" id="IPR003593">
    <property type="entry name" value="AAA+_ATPase"/>
</dbReference>
<dbReference type="InterPro" id="IPR050093">
    <property type="entry name" value="ABC_SmlMolc_Importer"/>
</dbReference>
<dbReference type="InterPro" id="IPR003439">
    <property type="entry name" value="ABC_transporter-like_ATP-bd"/>
</dbReference>
<dbReference type="InterPro" id="IPR017871">
    <property type="entry name" value="ABC_transporter-like_CS"/>
</dbReference>
<dbReference type="InterPro" id="IPR041193">
    <property type="entry name" value="CysA_C"/>
</dbReference>
<dbReference type="InterPro" id="IPR008995">
    <property type="entry name" value="Mo/tungstate-bd_C_term_dom"/>
</dbReference>
<dbReference type="InterPro" id="IPR027417">
    <property type="entry name" value="P-loop_NTPase"/>
</dbReference>
<dbReference type="InterPro" id="IPR005666">
    <property type="entry name" value="Sulph_transpt1"/>
</dbReference>
<dbReference type="InterPro" id="IPR024765">
    <property type="entry name" value="TOBE-like"/>
</dbReference>
<dbReference type="NCBIfam" id="TIGR00968">
    <property type="entry name" value="3a0106s01"/>
    <property type="match status" value="1"/>
</dbReference>
<dbReference type="PANTHER" id="PTHR42781">
    <property type="entry name" value="SPERMIDINE/PUTRESCINE IMPORT ATP-BINDING PROTEIN POTA"/>
    <property type="match status" value="1"/>
</dbReference>
<dbReference type="PANTHER" id="PTHR42781:SF4">
    <property type="entry name" value="SPERMIDINE_PUTRESCINE IMPORT ATP-BINDING PROTEIN POTA"/>
    <property type="match status" value="1"/>
</dbReference>
<dbReference type="Pfam" id="PF00005">
    <property type="entry name" value="ABC_tran"/>
    <property type="match status" value="1"/>
</dbReference>
<dbReference type="Pfam" id="PF17850">
    <property type="entry name" value="CysA_C_terminal"/>
    <property type="match status" value="1"/>
</dbReference>
<dbReference type="Pfam" id="PF12857">
    <property type="entry name" value="TOBE_3"/>
    <property type="match status" value="1"/>
</dbReference>
<dbReference type="SMART" id="SM00382">
    <property type="entry name" value="AAA"/>
    <property type="match status" value="1"/>
</dbReference>
<dbReference type="SUPFAM" id="SSF50331">
    <property type="entry name" value="MOP-like"/>
    <property type="match status" value="1"/>
</dbReference>
<dbReference type="SUPFAM" id="SSF52540">
    <property type="entry name" value="P-loop containing nucleoside triphosphate hydrolases"/>
    <property type="match status" value="1"/>
</dbReference>
<dbReference type="PROSITE" id="PS00211">
    <property type="entry name" value="ABC_TRANSPORTER_1"/>
    <property type="match status" value="1"/>
</dbReference>
<dbReference type="PROSITE" id="PS50893">
    <property type="entry name" value="ABC_TRANSPORTER_2"/>
    <property type="match status" value="1"/>
</dbReference>
<dbReference type="PROSITE" id="PS51237">
    <property type="entry name" value="CYSA"/>
    <property type="match status" value="1"/>
</dbReference>
<gene>
    <name evidence="1" type="primary">cysA</name>
    <name type="ordered locus">MCA1181</name>
</gene>
<comment type="function">
    <text evidence="1">Part of the ABC transporter complex CysAWTP involved in sulfate/thiosulfate import. Responsible for energy coupling to the transport system.</text>
</comment>
<comment type="catalytic activity">
    <reaction evidence="1">
        <text>sulfate(out) + ATP + H2O = sulfate(in) + ADP + phosphate + H(+)</text>
        <dbReference type="Rhea" id="RHEA:10192"/>
        <dbReference type="ChEBI" id="CHEBI:15377"/>
        <dbReference type="ChEBI" id="CHEBI:15378"/>
        <dbReference type="ChEBI" id="CHEBI:16189"/>
        <dbReference type="ChEBI" id="CHEBI:30616"/>
        <dbReference type="ChEBI" id="CHEBI:43474"/>
        <dbReference type="ChEBI" id="CHEBI:456216"/>
        <dbReference type="EC" id="7.3.2.3"/>
    </reaction>
</comment>
<comment type="catalytic activity">
    <reaction evidence="1">
        <text>thiosulfate(out) + ATP + H2O = thiosulfate(in) + ADP + phosphate + H(+)</text>
        <dbReference type="Rhea" id="RHEA:29871"/>
        <dbReference type="ChEBI" id="CHEBI:15377"/>
        <dbReference type="ChEBI" id="CHEBI:15378"/>
        <dbReference type="ChEBI" id="CHEBI:30616"/>
        <dbReference type="ChEBI" id="CHEBI:33542"/>
        <dbReference type="ChEBI" id="CHEBI:43474"/>
        <dbReference type="ChEBI" id="CHEBI:456216"/>
        <dbReference type="EC" id="7.3.2.3"/>
    </reaction>
</comment>
<comment type="subunit">
    <text evidence="1">The complex is composed of two ATP-binding proteins (CysA), two transmembrane proteins (CysT and CysW) and a solute-binding protein (CysP).</text>
</comment>
<comment type="subcellular location">
    <subcellularLocation>
        <location evidence="1">Cell inner membrane</location>
        <topology evidence="1">Peripheral membrane protein</topology>
    </subcellularLocation>
</comment>
<comment type="similarity">
    <text evidence="1">Belongs to the ABC transporter superfamily. Sulfate/tungstate importer (TC 3.A.1.6) family.</text>
</comment>
<sequence length="348" mass="38768">MSIEIRNITKSFGSFQALKGIDLTIGSGELVALLGPSGCGKTTLLRIIAGLEAADSGQILLHGEDTTHRHVRERRVGFVFQHYALFRHMSVFENIAFGLRVRPRGQRPPEAEIRRRVQELLELVQLDWLADRHPGQLSGGQRQRIALARALAVEPKVLLLDEPFGALDAKVRKDLRRWLRRLHDGLHITSVFVTHDQEEALEVADRVVVLNAGQIEQVGSADEVYDHPATPFVCQFIGDVNLFHGRVHGGRALIGETVIELPDIAESDTEKALFFARPHEIEIGRGTGIGAVVRAIRRRGNAVRVELERKDGRGAVEAELSREAFGRHAIKHGDEVVIQPSKIRMFQP</sequence>
<reference key="1">
    <citation type="journal article" date="2004" name="PLoS Biol.">
        <title>Genomic insights into methanotrophy: the complete genome sequence of Methylococcus capsulatus (Bath).</title>
        <authorList>
            <person name="Ward N.L."/>
            <person name="Larsen O."/>
            <person name="Sakwa J."/>
            <person name="Bruseth L."/>
            <person name="Khouri H.M."/>
            <person name="Durkin A.S."/>
            <person name="Dimitrov G."/>
            <person name="Jiang L."/>
            <person name="Scanlan D."/>
            <person name="Kang K.H."/>
            <person name="Lewis M.R."/>
            <person name="Nelson K.E."/>
            <person name="Methe B.A."/>
            <person name="Wu M."/>
            <person name="Heidelberg J.F."/>
            <person name="Paulsen I.T."/>
            <person name="Fouts D.E."/>
            <person name="Ravel J."/>
            <person name="Tettelin H."/>
            <person name="Ren Q."/>
            <person name="Read T.D."/>
            <person name="DeBoy R.T."/>
            <person name="Seshadri R."/>
            <person name="Salzberg S.L."/>
            <person name="Jensen H.B."/>
            <person name="Birkeland N.K."/>
            <person name="Nelson W.C."/>
            <person name="Dodson R.J."/>
            <person name="Grindhaug S.H."/>
            <person name="Holt I.E."/>
            <person name="Eidhammer I."/>
            <person name="Jonasen I."/>
            <person name="Vanaken S."/>
            <person name="Utterback T.R."/>
            <person name="Feldblyum T.V."/>
            <person name="Fraser C.M."/>
            <person name="Lillehaug J.R."/>
            <person name="Eisen J.A."/>
        </authorList>
    </citation>
    <scope>NUCLEOTIDE SEQUENCE [LARGE SCALE GENOMIC DNA]</scope>
    <source>
        <strain>ATCC 33009 / NCIMB 11132 / Bath</strain>
    </source>
</reference>
<proteinExistence type="inferred from homology"/>
<feature type="chain" id="PRO_0000092273" description="Sulfate/thiosulfate import ATP-binding protein CysA">
    <location>
        <begin position="1"/>
        <end position="348"/>
    </location>
</feature>
<feature type="domain" description="ABC transporter" evidence="1">
    <location>
        <begin position="3"/>
        <end position="237"/>
    </location>
</feature>
<feature type="binding site" evidence="1">
    <location>
        <begin position="35"/>
        <end position="42"/>
    </location>
    <ligand>
        <name>ATP</name>
        <dbReference type="ChEBI" id="CHEBI:30616"/>
    </ligand>
</feature>
<protein>
    <recommendedName>
        <fullName evidence="1">Sulfate/thiosulfate import ATP-binding protein CysA</fullName>
        <ecNumber evidence="1">7.3.2.3</ecNumber>
    </recommendedName>
    <alternativeName>
        <fullName evidence="1">Sulfate-transporting ATPase</fullName>
    </alternativeName>
</protein>
<evidence type="ECO:0000255" key="1">
    <source>
        <dbReference type="HAMAP-Rule" id="MF_01701"/>
    </source>
</evidence>
<name>CYSA_METCA</name>